<accession>Q9LME6</accession>
<accession>Q8RXV1</accession>
<evidence type="ECO:0000250" key="1"/>
<evidence type="ECO:0000255" key="2">
    <source>
        <dbReference type="PROSITE-ProRule" id="PRU00338"/>
    </source>
</evidence>
<evidence type="ECO:0000256" key="3">
    <source>
        <dbReference type="SAM" id="MobiDB-lite"/>
    </source>
</evidence>
<evidence type="ECO:0000269" key="4">
    <source>
    </source>
</evidence>
<evidence type="ECO:0000269" key="5">
    <source>
    </source>
</evidence>
<evidence type="ECO:0000269" key="6">
    <source>
    </source>
</evidence>
<evidence type="ECO:0000303" key="7">
    <source>
    </source>
</evidence>
<keyword id="KW-0025">Alternative splicing</keyword>
<keyword id="KW-0238">DNA-binding</keyword>
<keyword id="KW-0539">Nucleus</keyword>
<keyword id="KW-1185">Reference proteome</keyword>
<keyword id="KW-0804">Transcription</keyword>
<keyword id="KW-0805">Transcription regulation</keyword>
<organism>
    <name type="scientific">Arabidopsis thaliana</name>
    <name type="common">Mouse-ear cress</name>
    <dbReference type="NCBI Taxonomy" id="3702"/>
    <lineage>
        <taxon>Eukaryota</taxon>
        <taxon>Viridiplantae</taxon>
        <taxon>Streptophyta</taxon>
        <taxon>Embryophyta</taxon>
        <taxon>Tracheophyta</taxon>
        <taxon>Spermatophyta</taxon>
        <taxon>Magnoliopsida</taxon>
        <taxon>eudicotyledons</taxon>
        <taxon>Gunneridae</taxon>
        <taxon>Pentapetalae</taxon>
        <taxon>rosids</taxon>
        <taxon>malvids</taxon>
        <taxon>Brassicales</taxon>
        <taxon>Brassicaceae</taxon>
        <taxon>Camelineae</taxon>
        <taxon>Arabidopsis</taxon>
    </lineage>
</organism>
<proteinExistence type="evidence at transcript level"/>
<gene>
    <name type="primary">MBD8</name>
    <name type="ordered locus">At1g22310</name>
    <name type="ORF">T16E15.7</name>
</gene>
<reference key="1">
    <citation type="journal article" date="2000" name="Nature">
        <title>Sequence and analysis of chromosome 1 of the plant Arabidopsis thaliana.</title>
        <authorList>
            <person name="Theologis A."/>
            <person name="Ecker J.R."/>
            <person name="Palm C.J."/>
            <person name="Federspiel N.A."/>
            <person name="Kaul S."/>
            <person name="White O."/>
            <person name="Alonso J."/>
            <person name="Altafi H."/>
            <person name="Araujo R."/>
            <person name="Bowman C.L."/>
            <person name="Brooks S.Y."/>
            <person name="Buehler E."/>
            <person name="Chan A."/>
            <person name="Chao Q."/>
            <person name="Chen H."/>
            <person name="Cheuk R.F."/>
            <person name="Chin C.W."/>
            <person name="Chung M.K."/>
            <person name="Conn L."/>
            <person name="Conway A.B."/>
            <person name="Conway A.R."/>
            <person name="Creasy T.H."/>
            <person name="Dewar K."/>
            <person name="Dunn P."/>
            <person name="Etgu P."/>
            <person name="Feldblyum T.V."/>
            <person name="Feng J.-D."/>
            <person name="Fong B."/>
            <person name="Fujii C.Y."/>
            <person name="Gill J.E."/>
            <person name="Goldsmith A.D."/>
            <person name="Haas B."/>
            <person name="Hansen N.F."/>
            <person name="Hughes B."/>
            <person name="Huizar L."/>
            <person name="Hunter J.L."/>
            <person name="Jenkins J."/>
            <person name="Johnson-Hopson C."/>
            <person name="Khan S."/>
            <person name="Khaykin E."/>
            <person name="Kim C.J."/>
            <person name="Koo H.L."/>
            <person name="Kremenetskaia I."/>
            <person name="Kurtz D.B."/>
            <person name="Kwan A."/>
            <person name="Lam B."/>
            <person name="Langin-Hooper S."/>
            <person name="Lee A."/>
            <person name="Lee J.M."/>
            <person name="Lenz C.A."/>
            <person name="Li J.H."/>
            <person name="Li Y.-P."/>
            <person name="Lin X."/>
            <person name="Liu S.X."/>
            <person name="Liu Z.A."/>
            <person name="Luros J.S."/>
            <person name="Maiti R."/>
            <person name="Marziali A."/>
            <person name="Militscher J."/>
            <person name="Miranda M."/>
            <person name="Nguyen M."/>
            <person name="Nierman W.C."/>
            <person name="Osborne B.I."/>
            <person name="Pai G."/>
            <person name="Peterson J."/>
            <person name="Pham P.K."/>
            <person name="Rizzo M."/>
            <person name="Rooney T."/>
            <person name="Rowley D."/>
            <person name="Sakano H."/>
            <person name="Salzberg S.L."/>
            <person name="Schwartz J.R."/>
            <person name="Shinn P."/>
            <person name="Southwick A.M."/>
            <person name="Sun H."/>
            <person name="Tallon L.J."/>
            <person name="Tambunga G."/>
            <person name="Toriumi M.J."/>
            <person name="Town C.D."/>
            <person name="Utterback T."/>
            <person name="Van Aken S."/>
            <person name="Vaysberg M."/>
            <person name="Vysotskaia V.S."/>
            <person name="Walker M."/>
            <person name="Wu D."/>
            <person name="Yu G."/>
            <person name="Fraser C.M."/>
            <person name="Venter J.C."/>
            <person name="Davis R.W."/>
        </authorList>
    </citation>
    <scope>NUCLEOTIDE SEQUENCE [LARGE SCALE GENOMIC DNA]</scope>
    <source>
        <strain>cv. Columbia</strain>
    </source>
</reference>
<reference key="2">
    <citation type="journal article" date="2017" name="Plant J.">
        <title>Araport11: a complete reannotation of the Arabidopsis thaliana reference genome.</title>
        <authorList>
            <person name="Cheng C.Y."/>
            <person name="Krishnakumar V."/>
            <person name="Chan A.P."/>
            <person name="Thibaud-Nissen F."/>
            <person name="Schobel S."/>
            <person name="Town C.D."/>
        </authorList>
    </citation>
    <scope>GENOME REANNOTATION</scope>
    <source>
        <strain>cv. Columbia</strain>
    </source>
</reference>
<reference key="3">
    <citation type="journal article" date="2002" name="Science">
        <title>Functional annotation of a full-length Arabidopsis cDNA collection.</title>
        <authorList>
            <person name="Seki M."/>
            <person name="Narusaka M."/>
            <person name="Kamiya A."/>
            <person name="Ishida J."/>
            <person name="Satou M."/>
            <person name="Sakurai T."/>
            <person name="Nakajima M."/>
            <person name="Enju A."/>
            <person name="Akiyama K."/>
            <person name="Oono Y."/>
            <person name="Muramatsu M."/>
            <person name="Hayashizaki Y."/>
            <person name="Kawai J."/>
            <person name="Carninci P."/>
            <person name="Itoh M."/>
            <person name="Ishii Y."/>
            <person name="Arakawa T."/>
            <person name="Shibata K."/>
            <person name="Shinagawa A."/>
            <person name="Shinozaki K."/>
        </authorList>
    </citation>
    <scope>NUCLEOTIDE SEQUENCE [LARGE SCALE MRNA] (ISOFORM 1)</scope>
    <source>
        <strain>cv. Columbia</strain>
    </source>
</reference>
<reference key="4">
    <citation type="journal article" date="2003" name="Science">
        <title>Empirical analysis of transcriptional activity in the Arabidopsis genome.</title>
        <authorList>
            <person name="Yamada K."/>
            <person name="Lim J."/>
            <person name="Dale J.M."/>
            <person name="Chen H."/>
            <person name="Shinn P."/>
            <person name="Palm C.J."/>
            <person name="Southwick A.M."/>
            <person name="Wu H.C."/>
            <person name="Kim C.J."/>
            <person name="Nguyen M."/>
            <person name="Pham P.K."/>
            <person name="Cheuk R.F."/>
            <person name="Karlin-Newmann G."/>
            <person name="Liu S.X."/>
            <person name="Lam B."/>
            <person name="Sakano H."/>
            <person name="Wu T."/>
            <person name="Yu G."/>
            <person name="Miranda M."/>
            <person name="Quach H.L."/>
            <person name="Tripp M."/>
            <person name="Chang C.H."/>
            <person name="Lee J.M."/>
            <person name="Toriumi M.J."/>
            <person name="Chan M.M."/>
            <person name="Tang C.C."/>
            <person name="Onodera C.S."/>
            <person name="Deng J.M."/>
            <person name="Akiyama K."/>
            <person name="Ansari Y."/>
            <person name="Arakawa T."/>
            <person name="Banh J."/>
            <person name="Banno F."/>
            <person name="Bowser L."/>
            <person name="Brooks S.Y."/>
            <person name="Carninci P."/>
            <person name="Chao Q."/>
            <person name="Choy N."/>
            <person name="Enju A."/>
            <person name="Goldsmith A.D."/>
            <person name="Gurjal M."/>
            <person name="Hansen N.F."/>
            <person name="Hayashizaki Y."/>
            <person name="Johnson-Hopson C."/>
            <person name="Hsuan V.W."/>
            <person name="Iida K."/>
            <person name="Karnes M."/>
            <person name="Khan S."/>
            <person name="Koesema E."/>
            <person name="Ishida J."/>
            <person name="Jiang P.X."/>
            <person name="Jones T."/>
            <person name="Kawai J."/>
            <person name="Kamiya A."/>
            <person name="Meyers C."/>
            <person name="Nakajima M."/>
            <person name="Narusaka M."/>
            <person name="Seki M."/>
            <person name="Sakurai T."/>
            <person name="Satou M."/>
            <person name="Tamse R."/>
            <person name="Vaysberg M."/>
            <person name="Wallender E.K."/>
            <person name="Wong C."/>
            <person name="Yamamura Y."/>
            <person name="Yuan S."/>
            <person name="Shinozaki K."/>
            <person name="Davis R.W."/>
            <person name="Theologis A."/>
            <person name="Ecker J.R."/>
        </authorList>
    </citation>
    <scope>NUCLEOTIDE SEQUENCE [LARGE SCALE MRNA] (ISOFORM 2)</scope>
    <source>
        <strain>cv. Columbia</strain>
    </source>
</reference>
<reference key="5">
    <citation type="journal article" date="2003" name="Nucleic Acids Res.">
        <title>Ten members of the Arabidopsis gene family encoding methyl-CpG-binding domain proteins are transcriptionally active and at least one, AtMBD11, is crucial for normal development.</title>
        <authorList>
            <person name="Berg A."/>
            <person name="Meza T.J."/>
            <person name="Mahic M."/>
            <person name="Thorstensen T."/>
            <person name="Kristiansen K."/>
            <person name="Aalen R.B."/>
        </authorList>
    </citation>
    <scope>ALTERNATIVE SPLICING</scope>
    <scope>TISSUE SPECIFICITY</scope>
    <scope>GENE FAMILY</scope>
    <scope>NOMENCLATURE</scope>
</reference>
<reference key="6">
    <citation type="journal article" date="2003" name="Plant Physiol.">
        <title>Methylated DNA-binding proteins from Arabidopsis.</title>
        <authorList>
            <person name="Ito M."/>
            <person name="Koike A."/>
            <person name="Koizumi N."/>
            <person name="Sano H."/>
        </authorList>
    </citation>
    <scope>SUBCELLULAR LOCATION</scope>
</reference>
<reference key="7">
    <citation type="journal article" date="2005" name="Plant Physiol.">
        <title>Evolutionary divergence of monocot and dicot methyl-CpG-binding domain proteins.</title>
        <authorList>
            <person name="Springer N.M."/>
            <person name="Kaeppler S.M."/>
        </authorList>
    </citation>
    <scope>GENE FAMILY</scope>
</reference>
<reference key="8">
    <citation type="journal article" date="2007" name="Trends Plant Sci.">
        <title>Methyl-CpG-binding domain proteins in plants: interpreters of DNA methylation.</title>
        <authorList>
            <person name="Zemach A."/>
            <person name="Grafi G."/>
        </authorList>
    </citation>
    <scope>REVIEW</scope>
</reference>
<reference key="9">
    <citation type="journal article" date="2009" name="Physiol. Plantarum">
        <title>AtMBD8 is involved in control of flowering time in the C24 ecotype of Arabidopsis thaliana.</title>
        <authorList>
            <person name="Stangeland B."/>
            <person name="Rosenhave E.M."/>
            <person name="Winge P."/>
            <person name="Berg A."/>
            <person name="Amundsen S.S."/>
            <person name="Karabeg M."/>
            <person name="Mandal A."/>
            <person name="Bones A.M."/>
            <person name="Grini P.E."/>
            <person name="Aalen R.B."/>
        </authorList>
    </citation>
    <scope>FUNCTION</scope>
    <scope>DISRUPTION PHENOTYPE</scope>
    <scope>TISSUE SPECIFICITY</scope>
    <scope>DEVELOPMENTAL STAGE</scope>
    <source>
        <strain>cv. C24</strain>
        <strain>cv. Columbia</strain>
    </source>
</reference>
<sequence length="524" mass="58669">MDDGDLGNNHHNFLGGAGNRLSAESLPLIDTRLLSQSELRALSQCSSLSPSSSASLAASAGGDDDLTPKIDRSVFNESAGSRKQTFLRLRLARHPQPPEEPPSPQRQRDDSSREEQTQVASLLRSLFNVDSNQSKEEEDEGEEELEDNEGQIHYNSYVYQRPNLDSIQNVLIQGTSGNKIKRKRGRPRKIRNPSEENEVLDLTGEASTYVFVDKTSSNLGMVSRVGSSGISLDSNSVKRKRGRPPKNKEEIMNLEKRDSAIVNISAFDKEELVVNLENREGTIVDLSALASVSEDPYEEELRRITVGLKTKEEILGFLEQLNGEWVNIGKKKKVVNACDYGGYLPRGWRLMLYIKRKGSNLLLACRRYISPDGQQFETCKEVSTYLRSLLESPSKNQHYYLQSDNKTLGQQPVIANESLLGNSDSMDSETMQYLESGRTSSEVFEEAKAVENGNEADRVKTSLMQKDDNADFLNGVEDNDDDMKKRDGNMENLATLSNSEMTKSLPTTTNELQQYFSSQINRVQ</sequence>
<protein>
    <recommendedName>
        <fullName>Methyl-CpG-binding domain-containing protein 8</fullName>
        <shortName>AtMBD8</shortName>
        <shortName>MBD08</shortName>
    </recommendedName>
    <alternativeName>
        <fullName>Methyl-CpG-binding protein MBD8</fullName>
    </alternativeName>
</protein>
<comment type="function">
    <text evidence="1 6">Probable transcriptional regulator (By similarity). May regulates developmental traits such as flowering time.</text>
</comment>
<comment type="subcellular location">
    <subcellularLocation>
        <location evidence="5">Nucleus</location>
    </subcellularLocation>
</comment>
<comment type="alternative products">
    <event type="alternative splicing"/>
    <isoform>
        <id>Q9LME6-1</id>
        <name>1</name>
        <name>AtMBD8a</name>
        <sequence type="displayed"/>
    </isoform>
    <isoform>
        <id>Q9LME6-2</id>
        <name>2</name>
        <name>AtMBD8b</name>
        <sequence type="described" ref="VSP_040660"/>
    </isoform>
</comment>
<comment type="tissue specificity">
    <text evidence="4 6">Expressed in shoot meristems, roots (vasculature and tips), hypocotyls (vasculature), cotyledons (vasculature and hydathodes), young leaves, buds, flowers and stems. Detected in stomata.</text>
</comment>
<comment type="developmental stage">
    <text evidence="6">Before pollination, expressed in stamens and carpels. After pollination, observed in the veins of petals, sepals, and filaments. Present in seeds at the embryo globular stage, both in the embryo and the endosperm. Later, at the embryo heart stage, not detected in the embryo, but strongly expressed in the maternal chalazal tissue and present in the endosperm.</text>
</comment>
<comment type="domain">
    <text evidence="1">The methyl-CpG-binding domain (MBD) functions both in binding to methylated DNA and in protein interactions.</text>
</comment>
<comment type="disruption phenotype">
    <text evidence="6">In strain cv. C24, delayed flowering time during both long and short days associated with a down-regulation of the major promoters of flowering FT and SOC1. In strain cv. Columbia, no delayed phenotype.</text>
</comment>
<comment type="miscellaneous">
    <text>In strain cv. 24, promotes the flowering time transition, probably via the transcription regulation of FT.</text>
</comment>
<name>MBD8_ARATH</name>
<dbReference type="EMBL" id="AC068562">
    <property type="protein sequence ID" value="AAF87260.1"/>
    <property type="molecule type" value="Genomic_DNA"/>
</dbReference>
<dbReference type="EMBL" id="CP002684">
    <property type="protein sequence ID" value="AEE30228.1"/>
    <property type="molecule type" value="Genomic_DNA"/>
</dbReference>
<dbReference type="EMBL" id="CP002684">
    <property type="protein sequence ID" value="AEE30229.1"/>
    <property type="molecule type" value="Genomic_DNA"/>
</dbReference>
<dbReference type="EMBL" id="AK118852">
    <property type="protein sequence ID" value="BAC43440.1"/>
    <property type="molecule type" value="mRNA"/>
</dbReference>
<dbReference type="EMBL" id="AY080662">
    <property type="protein sequence ID" value="AAL86338.1"/>
    <property type="molecule type" value="mRNA"/>
</dbReference>
<dbReference type="EMBL" id="AY133726">
    <property type="protein sequence ID" value="AAM91660.1"/>
    <property type="molecule type" value="mRNA"/>
</dbReference>
<dbReference type="PIR" id="A86356">
    <property type="entry name" value="A86356"/>
</dbReference>
<dbReference type="RefSeq" id="NP_173650.3">
    <molecule id="Q9LME6-1"/>
    <property type="nucleotide sequence ID" value="NM_102082.4"/>
</dbReference>
<dbReference type="RefSeq" id="NP_850949.1">
    <molecule id="Q9LME6-2"/>
    <property type="nucleotide sequence ID" value="NM_180618.2"/>
</dbReference>
<dbReference type="BioGRID" id="24077">
    <property type="interactions" value="3"/>
</dbReference>
<dbReference type="FunCoup" id="Q9LME6">
    <property type="interactions" value="31"/>
</dbReference>
<dbReference type="IntAct" id="Q9LME6">
    <property type="interactions" value="4"/>
</dbReference>
<dbReference type="STRING" id="3702.Q9LME6"/>
<dbReference type="iPTMnet" id="Q9LME6"/>
<dbReference type="PaxDb" id="3702-AT1G22310.2"/>
<dbReference type="ProteomicsDB" id="238691">
    <molecule id="Q9LME6-1"/>
</dbReference>
<dbReference type="EnsemblPlants" id="AT1G22310.1">
    <molecule id="Q9LME6-2"/>
    <property type="protein sequence ID" value="AT1G22310.1"/>
    <property type="gene ID" value="AT1G22310"/>
</dbReference>
<dbReference type="EnsemblPlants" id="AT1G22310.2">
    <molecule id="Q9LME6-1"/>
    <property type="protein sequence ID" value="AT1G22310.2"/>
    <property type="gene ID" value="AT1G22310"/>
</dbReference>
<dbReference type="GeneID" id="838838"/>
<dbReference type="Gramene" id="AT1G22310.1">
    <molecule id="Q9LME6-2"/>
    <property type="protein sequence ID" value="AT1G22310.1"/>
    <property type="gene ID" value="AT1G22310"/>
</dbReference>
<dbReference type="Gramene" id="AT1G22310.2">
    <molecule id="Q9LME6-1"/>
    <property type="protein sequence ID" value="AT1G22310.2"/>
    <property type="gene ID" value="AT1G22310"/>
</dbReference>
<dbReference type="KEGG" id="ath:AT1G22310"/>
<dbReference type="Araport" id="AT1G22310"/>
<dbReference type="TAIR" id="AT1G22310">
    <property type="gene designation" value="MBD8"/>
</dbReference>
<dbReference type="eggNOG" id="ENOG502QPIK">
    <property type="taxonomic scope" value="Eukaryota"/>
</dbReference>
<dbReference type="HOGENOM" id="CLU_533581_0_0_1"/>
<dbReference type="InParanoid" id="Q9LME6"/>
<dbReference type="OMA" id="NEGQIHY"/>
<dbReference type="OrthoDB" id="1675150at2759"/>
<dbReference type="PhylomeDB" id="Q9LME6"/>
<dbReference type="PRO" id="PR:Q9LME6"/>
<dbReference type="Proteomes" id="UP000006548">
    <property type="component" value="Chromosome 1"/>
</dbReference>
<dbReference type="ExpressionAtlas" id="Q9LME6">
    <property type="expression patterns" value="baseline and differential"/>
</dbReference>
<dbReference type="GO" id="GO:0005634">
    <property type="term" value="C:nucleus"/>
    <property type="evidence" value="ECO:0000314"/>
    <property type="project" value="UniProtKB"/>
</dbReference>
<dbReference type="GO" id="GO:0008327">
    <property type="term" value="F:methyl-CpG binding"/>
    <property type="evidence" value="ECO:0000250"/>
    <property type="project" value="TAIR"/>
</dbReference>
<dbReference type="InterPro" id="IPR017956">
    <property type="entry name" value="AT_hook_DNA-bd_motif"/>
</dbReference>
<dbReference type="InterPro" id="IPR016177">
    <property type="entry name" value="DNA-bd_dom_sf"/>
</dbReference>
<dbReference type="InterPro" id="IPR037472">
    <property type="entry name" value="MBD8"/>
</dbReference>
<dbReference type="InterPro" id="IPR001739">
    <property type="entry name" value="Methyl_CpG_DNA-bd"/>
</dbReference>
<dbReference type="PANTHER" id="PTHR37701:SF13">
    <property type="entry name" value="C2H2-TYPE DOMAIN-CONTAINING PROTEIN"/>
    <property type="match status" value="1"/>
</dbReference>
<dbReference type="PANTHER" id="PTHR37701">
    <property type="entry name" value="METHYL-CPG-BINDING DOMAIN-CONTAINING PROTEIN 8"/>
    <property type="match status" value="1"/>
</dbReference>
<dbReference type="Pfam" id="PF02178">
    <property type="entry name" value="AT_hook"/>
    <property type="match status" value="2"/>
</dbReference>
<dbReference type="Pfam" id="PF01429">
    <property type="entry name" value="MBD"/>
    <property type="match status" value="1"/>
</dbReference>
<dbReference type="SMART" id="SM00384">
    <property type="entry name" value="AT_hook"/>
    <property type="match status" value="2"/>
</dbReference>
<dbReference type="SUPFAM" id="SSF54171">
    <property type="entry name" value="DNA-binding domain"/>
    <property type="match status" value="1"/>
</dbReference>
<dbReference type="PROSITE" id="PS50982">
    <property type="entry name" value="MBD"/>
    <property type="match status" value="1"/>
</dbReference>
<feature type="chain" id="PRO_0000405284" description="Methyl-CpG-binding domain-containing protein 8">
    <location>
        <begin position="1"/>
        <end position="524"/>
    </location>
</feature>
<feature type="domain" description="MBD" evidence="2">
    <location>
        <begin position="334"/>
        <end position="406"/>
    </location>
</feature>
<feature type="region of interest" description="Disordered" evidence="3">
    <location>
        <begin position="45"/>
        <end position="151"/>
    </location>
</feature>
<feature type="compositionally biased region" description="Low complexity" evidence="3">
    <location>
        <begin position="45"/>
        <end position="60"/>
    </location>
</feature>
<feature type="compositionally biased region" description="Polar residues" evidence="3">
    <location>
        <begin position="75"/>
        <end position="84"/>
    </location>
</feature>
<feature type="compositionally biased region" description="Basic and acidic residues" evidence="3">
    <location>
        <begin position="106"/>
        <end position="116"/>
    </location>
</feature>
<feature type="compositionally biased region" description="Acidic residues" evidence="3">
    <location>
        <begin position="136"/>
        <end position="149"/>
    </location>
</feature>
<feature type="splice variant" id="VSP_040660" description="In isoform 2." evidence="7">
    <original>MDDGDLGNNHHNFLGGAGNRLSAESLPLIDTRLLSQSELRALSQCSSLSPSSSASLAASAGGDDDLTPKIDRSVFNESAGSRKQTFLRLRLARHPQPPEEPPSPQRQRDDSSREEQTQVASLLRSLFNVDSNQSKEEEDEGEEELEDNEGQIHYNSYVYQRPNLDSIQNVLIQ</original>
    <variation>MSPLVAGNRHFSVSALRATLNHRRNLLRRNVRETILPVKNKRKSRRFSDLCSMSIRIRVKRKKTKERKSSKITK</variation>
    <location>
        <begin position="1"/>
        <end position="173"/>
    </location>
</feature>